<comment type="function">
    <text evidence="4">Suppresses host programmed cell death during infection by binding to Z.mays WAK17 isoform 2 and Z.mays LRR5, to prevent activation of Z.mays WAK17 isoform 1 and the downstream hypersensitive response.</text>
</comment>
<comment type="subunit">
    <text evidence="4">Interacts with Z.mays LRR5; the interaction is direct (PubMed:36577386). Interacts (via CFEM domain) with Z.mays WAK17 isoform 2; the interaction is direct (PubMed:36577386).</text>
</comment>
<comment type="subcellular location">
    <subcellularLocation>
        <location evidence="4">Secreted</location>
        <location evidence="4">Cell wall</location>
    </subcellularLocation>
    <subcellularLocation>
        <location evidence="1">Cell membrane</location>
        <topology evidence="1">Lipid-anchor</topology>
        <topology evidence="1">GPI-anchor</topology>
    </subcellularLocation>
    <subcellularLocation>
        <location evidence="4">Cell septum</location>
    </subcellularLocation>
    <subcellularLocation>
        <location evidence="4">Cytoplasm</location>
    </subcellularLocation>
    <subcellularLocation>
        <location evidence="4">Secreted</location>
    </subcellularLocation>
    <text evidence="4">Present at the cell surface of invading hyphae growing intra- and intercellularly in the host, and in conidia (PubMed:36577386). Present in septa of conidia (PubMed:36577386). Present in the cytoplasm of germ tubes and in hyphae (PubMed:36577386).</text>
</comment>
<comment type="developmental stage">
    <text evidence="4">Expressed during the spore stage, in conidia, during germination, and weakly in hyphae (at protein level).</text>
</comment>
<comment type="domain">
    <text evidence="4">The CFEM domain mediates interactions with host proteins.</text>
</comment>
<comment type="disruption phenotype">
    <text evidence="4">Decreases virulence in maize stalks (PubMed:36577386). No sensitivity to Congo Red (cell wall disrupting agent) or sodium dodecyl sulfate (SDS) (membrane disrupting agent), and in vitro cell population growth appears normal (PubMed:36577386).</text>
</comment>
<comment type="similarity">
    <text evidence="6">Belongs to the RBT5 family.</text>
</comment>
<proteinExistence type="evidence at protein level"/>
<reference evidence="8" key="1">
    <citation type="journal article" date="2007" name="Science">
        <title>The Fusarium graminearum genome reveals a link between localized polymorphism and pathogen specialization.</title>
        <authorList>
            <person name="Cuomo C.A."/>
            <person name="Gueldener U."/>
            <person name="Xu J.-R."/>
            <person name="Trail F."/>
            <person name="Turgeon B.G."/>
            <person name="Di Pietro A."/>
            <person name="Walton J.D."/>
            <person name="Ma L.-J."/>
            <person name="Baker S.E."/>
            <person name="Rep M."/>
            <person name="Adam G."/>
            <person name="Antoniw J."/>
            <person name="Baldwin T."/>
            <person name="Calvo S.E."/>
            <person name="Chang Y.-L."/>
            <person name="DeCaprio D."/>
            <person name="Gale L.R."/>
            <person name="Gnerre S."/>
            <person name="Goswami R.S."/>
            <person name="Hammond-Kosack K."/>
            <person name="Harris L.J."/>
            <person name="Hilburn K."/>
            <person name="Kennell J.C."/>
            <person name="Kroken S."/>
            <person name="Magnuson J.K."/>
            <person name="Mannhaupt G."/>
            <person name="Mauceli E.W."/>
            <person name="Mewes H.-W."/>
            <person name="Mitterbauer R."/>
            <person name="Muehlbauer G."/>
            <person name="Muensterkoetter M."/>
            <person name="Nelson D."/>
            <person name="O'Donnell K."/>
            <person name="Ouellet T."/>
            <person name="Qi W."/>
            <person name="Quesneville H."/>
            <person name="Roncero M.I.G."/>
            <person name="Seong K.-Y."/>
            <person name="Tetko I.V."/>
            <person name="Urban M."/>
            <person name="Waalwijk C."/>
            <person name="Ward T.J."/>
            <person name="Yao J."/>
            <person name="Birren B.W."/>
            <person name="Kistler H.C."/>
        </authorList>
    </citation>
    <scope>NUCLEOTIDE SEQUENCE [LARGE SCALE GENOMIC DNA]</scope>
    <source>
        <strain evidence="8">ATCC MYA-4620 / CBS 123657 / FGSC 9075 / NRRL 31084 / PH-1</strain>
    </source>
</reference>
<reference evidence="8" key="2">
    <citation type="journal article" date="2010" name="Nature">
        <title>Comparative genomics reveals mobile pathogenicity chromosomes in Fusarium.</title>
        <authorList>
            <person name="Ma L.-J."/>
            <person name="van der Does H.C."/>
            <person name="Borkovich K.A."/>
            <person name="Coleman J.J."/>
            <person name="Daboussi M.-J."/>
            <person name="Di Pietro A."/>
            <person name="Dufresne M."/>
            <person name="Freitag M."/>
            <person name="Grabherr M."/>
            <person name="Henrissat B."/>
            <person name="Houterman P.M."/>
            <person name="Kang S."/>
            <person name="Shim W.-B."/>
            <person name="Woloshuk C."/>
            <person name="Xie X."/>
            <person name="Xu J.-R."/>
            <person name="Antoniw J."/>
            <person name="Baker S.E."/>
            <person name="Bluhm B.H."/>
            <person name="Breakspear A."/>
            <person name="Brown D.W."/>
            <person name="Butchko R.A.E."/>
            <person name="Chapman S."/>
            <person name="Coulson R."/>
            <person name="Coutinho P.M."/>
            <person name="Danchin E.G.J."/>
            <person name="Diener A."/>
            <person name="Gale L.R."/>
            <person name="Gardiner D.M."/>
            <person name="Goff S."/>
            <person name="Hammond-Kosack K.E."/>
            <person name="Hilburn K."/>
            <person name="Hua-Van A."/>
            <person name="Jonkers W."/>
            <person name="Kazan K."/>
            <person name="Kodira C.D."/>
            <person name="Koehrsen M."/>
            <person name="Kumar L."/>
            <person name="Lee Y.-H."/>
            <person name="Li L."/>
            <person name="Manners J.M."/>
            <person name="Miranda-Saavedra D."/>
            <person name="Mukherjee M."/>
            <person name="Park G."/>
            <person name="Park J."/>
            <person name="Park S.-Y."/>
            <person name="Proctor R.H."/>
            <person name="Regev A."/>
            <person name="Ruiz-Roldan M.C."/>
            <person name="Sain D."/>
            <person name="Sakthikumar S."/>
            <person name="Sykes S."/>
            <person name="Schwartz D.C."/>
            <person name="Turgeon B.G."/>
            <person name="Wapinski I."/>
            <person name="Yoder O."/>
            <person name="Young S."/>
            <person name="Zeng Q."/>
            <person name="Zhou S."/>
            <person name="Galagan J."/>
            <person name="Cuomo C.A."/>
            <person name="Kistler H.C."/>
            <person name="Rep M."/>
        </authorList>
    </citation>
    <scope>GENOME REANNOTATION</scope>
    <source>
        <strain evidence="8">ATCC MYA-4620 / CBS 123657 / FGSC 9075 / NRRL 31084 / PH-1</strain>
    </source>
</reference>
<reference evidence="8" key="3">
    <citation type="journal article" date="2015" name="BMC Genomics">
        <title>The completed genome sequence of the pathogenic ascomycete fungus Fusarium graminearum.</title>
        <authorList>
            <person name="King R."/>
            <person name="Urban M."/>
            <person name="Hammond-Kosack M.C.U."/>
            <person name="Hassani-Pak K."/>
            <person name="Hammond-Kosack K.E."/>
        </authorList>
    </citation>
    <scope>NUCLEOTIDE SEQUENCE [LARGE SCALE GENOMIC DNA]</scope>
    <source>
        <strain>ATCC MYA-4620 / CBS 123657 / FGSC 9075 / NRRL 31084 / PH-1</strain>
    </source>
</reference>
<reference evidence="6" key="4">
    <citation type="journal article" date="2022" name="Cell Rep.">
        <title>Fungal CFEM effectors negatively regulate a maize wall-associated kinase by interacting with its alternatively spliced variant to dampen resistance.</title>
        <authorList>
            <person name="Zuo N."/>
            <person name="Bai W.Z."/>
            <person name="Wei W.Q."/>
            <person name="Yuan T.L."/>
            <person name="Zhang D."/>
            <person name="Wang Y.Z."/>
            <person name="Tang W.H."/>
        </authorList>
    </citation>
    <scope>FUNCTION</scope>
    <scope>INTERACTION WITH Z.MAYS WAK17 ISOFORM 2 AND LRR5</scope>
    <scope>SUBCELLULAR LOCATION</scope>
    <scope>DEVELOPMENTAL STAGE</scope>
    <scope>DOMAIN CFEM</scope>
    <scope>DISRUPTION PHENOTYPE</scope>
    <scope>MUTAGENESIS OF 26-CYS--CYS-85 AND 160-GLU--LEU-184</scope>
</reference>
<protein>
    <recommendedName>
        <fullName evidence="6">Effector CFEM1</fullName>
    </recommendedName>
</protein>
<evidence type="ECO:0000255" key="1"/>
<evidence type="ECO:0000255" key="2">
    <source>
        <dbReference type="PROSITE-ProRule" id="PRU01356"/>
    </source>
</evidence>
<evidence type="ECO:0000256" key="3">
    <source>
        <dbReference type="SAM" id="MobiDB-lite"/>
    </source>
</evidence>
<evidence type="ECO:0000269" key="4">
    <source>
    </source>
</evidence>
<evidence type="ECO:0000303" key="5">
    <source>
    </source>
</evidence>
<evidence type="ECO:0000305" key="6"/>
<evidence type="ECO:0000312" key="7">
    <source>
        <dbReference type="EMBL" id="CEF74311.1"/>
    </source>
</evidence>
<evidence type="ECO:0000312" key="8">
    <source>
        <dbReference type="Proteomes" id="UP000070720"/>
    </source>
</evidence>
<feature type="signal peptide" evidence="1">
    <location>
        <begin position="1"/>
        <end position="17"/>
    </location>
</feature>
<feature type="chain" id="PRO_5010124126" description="Effector CFEM1" evidence="1">
    <location>
        <begin position="18"/>
        <end position="163"/>
    </location>
</feature>
<feature type="propeptide" id="PRO_0000457864" description="Removed in mature form" evidence="1">
    <location>
        <begin position="164"/>
        <end position="184"/>
    </location>
</feature>
<feature type="domain" description="CFEM" evidence="2">
    <location>
        <begin position="18"/>
        <end position="112"/>
    </location>
</feature>
<feature type="region of interest" description="Disordered" evidence="3">
    <location>
        <begin position="83"/>
        <end position="106"/>
    </location>
</feature>
<feature type="region of interest" description="Disordered" evidence="3">
    <location>
        <begin position="136"/>
        <end position="163"/>
    </location>
</feature>
<feature type="compositionally biased region" description="Basic and acidic residues" evidence="3">
    <location>
        <begin position="88"/>
        <end position="103"/>
    </location>
</feature>
<feature type="binding site" description="axial binding residue" evidence="2">
    <location>
        <position position="45"/>
    </location>
    <ligand>
        <name>heme</name>
        <dbReference type="ChEBI" id="CHEBI:30413"/>
    </ligand>
    <ligandPart>
        <name>Fe</name>
        <dbReference type="ChEBI" id="CHEBI:18248"/>
    </ligandPart>
</feature>
<feature type="lipid moiety-binding region" description="GPI-anchor amidated asparagine" evidence="1">
    <location>
        <position position="163"/>
    </location>
</feature>
<feature type="disulfide bond" evidence="2">
    <location>
        <begin position="26"/>
        <end position="68"/>
    </location>
</feature>
<feature type="disulfide bond" evidence="2">
    <location>
        <begin position="30"/>
        <end position="63"/>
    </location>
</feature>
<feature type="disulfide bond" evidence="2">
    <location>
        <begin position="41"/>
        <end position="48"/>
    </location>
</feature>
<feature type="disulfide bond" evidence="2">
    <location>
        <begin position="50"/>
        <end position="85"/>
    </location>
</feature>
<feature type="mutagenesis site" description="Disrupts binding to Z.mays WAK17 and decreases virulence in maize stalks." evidence="4">
    <original>CAIPCLDKAIASETSCDKTDLACVCKGFSAVRSKATSCVIDECGTDVAINEVLPATENLC</original>
    <variation>AAIPALDKAIASETSADKTDLAAVAKGFSAVRSKATSAVIDEAGTDVAINEVLPATENLA</variation>
    <location>
        <begin position="26"/>
        <end position="85"/>
    </location>
</feature>
<feature type="mutagenesis site" description="Decreases virulence in maize stalks." evidence="4">
    <location>
        <begin position="160"/>
        <end position="184"/>
    </location>
</feature>
<dbReference type="EMBL" id="HG970332">
    <property type="protein sequence ID" value="CEF74311.1"/>
    <property type="molecule type" value="Genomic_DNA"/>
</dbReference>
<dbReference type="RefSeq" id="XP_011317952.1">
    <property type="nucleotide sequence ID" value="XM_011319650.1"/>
</dbReference>
<dbReference type="SMR" id="I1REI8"/>
<dbReference type="STRING" id="229533.I1REI8"/>
<dbReference type="KEGG" id="fgr:FGSG_02077"/>
<dbReference type="VEuPathDB" id="FungiDB:FGRAMPH1_01G05009"/>
<dbReference type="eggNOG" id="ENOG502SZ7B">
    <property type="taxonomic scope" value="Eukaryota"/>
</dbReference>
<dbReference type="HOGENOM" id="CLU_063084_5_1_1"/>
<dbReference type="InParanoid" id="I1REI8"/>
<dbReference type="OrthoDB" id="139376at110618"/>
<dbReference type="PHI-base" id="PHI:1093"/>
<dbReference type="Proteomes" id="UP000070720">
    <property type="component" value="Chromosome 1"/>
</dbReference>
<dbReference type="GO" id="GO:0030428">
    <property type="term" value="C:cell septum"/>
    <property type="evidence" value="ECO:0000314"/>
    <property type="project" value="UniProtKB"/>
</dbReference>
<dbReference type="GO" id="GO:0005737">
    <property type="term" value="C:cytoplasm"/>
    <property type="evidence" value="ECO:0000314"/>
    <property type="project" value="UniProtKB"/>
</dbReference>
<dbReference type="GO" id="GO:0009897">
    <property type="term" value="C:external side of plasma membrane"/>
    <property type="evidence" value="ECO:0000314"/>
    <property type="project" value="UniProtKB"/>
</dbReference>
<dbReference type="GO" id="GO:0005576">
    <property type="term" value="C:extracellular region"/>
    <property type="evidence" value="ECO:0007669"/>
    <property type="project" value="UniProtKB-SubCell"/>
</dbReference>
<dbReference type="GO" id="GO:0009277">
    <property type="term" value="C:fungal-type cell wall"/>
    <property type="evidence" value="ECO:0000314"/>
    <property type="project" value="UniProtKB"/>
</dbReference>
<dbReference type="GO" id="GO:0046872">
    <property type="term" value="F:metal ion binding"/>
    <property type="evidence" value="ECO:0007669"/>
    <property type="project" value="UniProtKB-KW"/>
</dbReference>
<dbReference type="GO" id="GO:0140403">
    <property type="term" value="P:effector-mediated suppression of host innate immune response"/>
    <property type="evidence" value="ECO:0000314"/>
    <property type="project" value="UniProtKB"/>
</dbReference>
<dbReference type="InterPro" id="IPR051735">
    <property type="entry name" value="CFEM_domain"/>
</dbReference>
<dbReference type="InterPro" id="IPR008427">
    <property type="entry name" value="Extracellular_membr_CFEM_dom"/>
</dbReference>
<dbReference type="PANTHER" id="PTHR37928">
    <property type="entry name" value="CFEM DOMAIN PROTEIN (AFU_ORTHOLOGUE AFUA_6G14090)"/>
    <property type="match status" value="1"/>
</dbReference>
<dbReference type="PANTHER" id="PTHR37928:SF2">
    <property type="entry name" value="GPI ANCHORED CFEM DOMAIN PROTEIN (AFU_ORTHOLOGUE AFUA_6G10580)"/>
    <property type="match status" value="1"/>
</dbReference>
<dbReference type="Pfam" id="PF05730">
    <property type="entry name" value="CFEM"/>
    <property type="match status" value="1"/>
</dbReference>
<dbReference type="SMART" id="SM00747">
    <property type="entry name" value="CFEM"/>
    <property type="match status" value="1"/>
</dbReference>
<dbReference type="PROSITE" id="PS52012">
    <property type="entry name" value="CFEM"/>
    <property type="match status" value="1"/>
</dbReference>
<gene>
    <name evidence="5" type="primary">CFEM1</name>
    <name evidence="7" type="ORF">FGRAMPH1_01T05009</name>
</gene>
<organism evidence="8">
    <name type="scientific">Gibberella zeae (strain ATCC MYA-4620 / CBS 123657 / FGSC 9075 / NRRL 31084 / PH-1)</name>
    <name type="common">Wheat head blight fungus</name>
    <name type="synonym">Fusarium graminearum</name>
    <dbReference type="NCBI Taxonomy" id="229533"/>
    <lineage>
        <taxon>Eukaryota</taxon>
        <taxon>Fungi</taxon>
        <taxon>Dikarya</taxon>
        <taxon>Ascomycota</taxon>
        <taxon>Pezizomycotina</taxon>
        <taxon>Sordariomycetes</taxon>
        <taxon>Hypocreomycetidae</taxon>
        <taxon>Hypocreales</taxon>
        <taxon>Nectriaceae</taxon>
        <taxon>Fusarium</taxon>
    </lineage>
</organism>
<sequence>MKYSVAFVALAAVAAQAQSLADVPKCAIPCLDKAIASETSCDKTDLACVCKGFSAVRSKATSCVIDECGTDVAINEVLPATENLCKNPPKESEAKSTAEEEKPTTTAAATSTLVVVTTSAEVVETTAAATTTVAPIIPTTAAEEPATSTPAAATPTKGPEQANGAAGLKGLGALAMAAFAALAL</sequence>
<accession>I1REI8</accession>
<name>CFM1_GIBZE</name>
<keyword id="KW-1003">Cell membrane</keyword>
<keyword id="KW-0134">Cell wall</keyword>
<keyword id="KW-0963">Cytoplasm</keyword>
<keyword id="KW-1015">Disulfide bond</keyword>
<keyword id="KW-0325">Glycoprotein</keyword>
<keyword id="KW-0336">GPI-anchor</keyword>
<keyword id="KW-0349">Heme</keyword>
<keyword id="KW-0408">Iron</keyword>
<keyword id="KW-0449">Lipoprotein</keyword>
<keyword id="KW-0472">Membrane</keyword>
<keyword id="KW-0479">Metal-binding</keyword>
<keyword id="KW-1185">Reference proteome</keyword>
<keyword id="KW-0964">Secreted</keyword>
<keyword id="KW-0732">Signal</keyword>